<gene>
    <name type="primary">oxr1</name>
    <name type="synonym">mug63</name>
    <name type="ORF">SPAC8C9.16c</name>
</gene>
<proteinExistence type="evidence at protein level"/>
<dbReference type="EMBL" id="CU329670">
    <property type="protein sequence ID" value="CAB16303.1"/>
    <property type="molecule type" value="Genomic_DNA"/>
</dbReference>
<dbReference type="PIR" id="T39152">
    <property type="entry name" value="T39152"/>
</dbReference>
<dbReference type="RefSeq" id="NP_594286.1">
    <property type="nucleotide sequence ID" value="NM_001019709.2"/>
</dbReference>
<dbReference type="SMR" id="O14284"/>
<dbReference type="BioGRID" id="278425">
    <property type="interactions" value="16"/>
</dbReference>
<dbReference type="FunCoup" id="O14284">
    <property type="interactions" value="293"/>
</dbReference>
<dbReference type="STRING" id="284812.O14284"/>
<dbReference type="PaxDb" id="4896-SPAC8C9.16c.1"/>
<dbReference type="EnsemblFungi" id="SPAC8C9.16c.1">
    <property type="protein sequence ID" value="SPAC8C9.16c.1:pep"/>
    <property type="gene ID" value="SPAC8C9.16c"/>
</dbReference>
<dbReference type="GeneID" id="2541938"/>
<dbReference type="KEGG" id="spo:2541938"/>
<dbReference type="PomBase" id="SPAC8C9.16c">
    <property type="gene designation" value="oxr1"/>
</dbReference>
<dbReference type="VEuPathDB" id="FungiDB:SPAC8C9.16c"/>
<dbReference type="eggNOG" id="KOG2372">
    <property type="taxonomic scope" value="Eukaryota"/>
</dbReference>
<dbReference type="HOGENOM" id="CLU_029204_0_0_1"/>
<dbReference type="InParanoid" id="O14284"/>
<dbReference type="OMA" id="HYGLWCD"/>
<dbReference type="PhylomeDB" id="O14284"/>
<dbReference type="PRO" id="PR:O14284"/>
<dbReference type="Proteomes" id="UP000002485">
    <property type="component" value="Chromosome I"/>
</dbReference>
<dbReference type="GO" id="GO:0005829">
    <property type="term" value="C:cytosol"/>
    <property type="evidence" value="ECO:0007005"/>
    <property type="project" value="PomBase"/>
</dbReference>
<dbReference type="GO" id="GO:0005739">
    <property type="term" value="C:mitochondrion"/>
    <property type="evidence" value="ECO:0007669"/>
    <property type="project" value="UniProtKB-SubCell"/>
</dbReference>
<dbReference type="GO" id="GO:0005634">
    <property type="term" value="C:nucleus"/>
    <property type="evidence" value="ECO:0007005"/>
    <property type="project" value="PomBase"/>
</dbReference>
<dbReference type="GO" id="GO:0033176">
    <property type="term" value="C:proton-transporting V-type ATPase complex"/>
    <property type="evidence" value="ECO:0000266"/>
    <property type="project" value="PomBase"/>
</dbReference>
<dbReference type="GO" id="GO:0042030">
    <property type="term" value="F:ATPase inhibitor activity"/>
    <property type="evidence" value="ECO:0000266"/>
    <property type="project" value="PomBase"/>
</dbReference>
<dbReference type="GO" id="GO:0051321">
    <property type="term" value="P:meiotic cell cycle"/>
    <property type="evidence" value="ECO:0007669"/>
    <property type="project" value="UniProtKB-KW"/>
</dbReference>
<dbReference type="GO" id="GO:0030641">
    <property type="term" value="P:regulation of cellular pH"/>
    <property type="evidence" value="ECO:0000266"/>
    <property type="project" value="PomBase"/>
</dbReference>
<dbReference type="InterPro" id="IPR006571">
    <property type="entry name" value="TLDc_dom"/>
</dbReference>
<dbReference type="PANTHER" id="PTHR23354:SF62">
    <property type="entry name" value="MUSTARD, ISOFORM V"/>
    <property type="match status" value="1"/>
</dbReference>
<dbReference type="PANTHER" id="PTHR23354">
    <property type="entry name" value="NUCLEOLAR PROTEIN 7/ESTROGEN RECEPTOR COACTIVATOR-RELATED"/>
    <property type="match status" value="1"/>
</dbReference>
<dbReference type="Pfam" id="PF07534">
    <property type="entry name" value="TLD"/>
    <property type="match status" value="1"/>
</dbReference>
<dbReference type="SMART" id="SM00584">
    <property type="entry name" value="TLDc"/>
    <property type="match status" value="1"/>
</dbReference>
<dbReference type="PROSITE" id="PS51886">
    <property type="entry name" value="TLDC"/>
    <property type="match status" value="1"/>
</dbReference>
<feature type="chain" id="PRO_0000058121" description="Oxidation resistance protein 1">
    <location>
        <begin position="1"/>
        <end position="188"/>
    </location>
</feature>
<feature type="domain" description="TLDc" evidence="2">
    <location>
        <begin position="13"/>
        <end position="188"/>
    </location>
</feature>
<sequence length="188" mass="21454">MFNFTRQYSVKDGLITDELASHIVENLPARYASAETWKRIYSLQHDGASLQTMYLACEKEKARSGHPKGACILAVRDTDGDVFGVFIPDYLIPAPHYFGSEETFLWKYFPPKKYVHYPFVGNSNFVAYCTKSFLAFGGGNGRYSLWLDGSLEYAYSSRTPAFENNPLSYRGCPDQRIQIVDIELWVLE</sequence>
<keyword id="KW-0963">Cytoplasm</keyword>
<keyword id="KW-0469">Meiosis</keyword>
<keyword id="KW-0496">Mitochondrion</keyword>
<keyword id="KW-0539">Nucleus</keyword>
<keyword id="KW-1185">Reference proteome</keyword>
<name>OXR1_SCHPO</name>
<comment type="function">
    <text evidence="1 3">May be involved in protection from oxidative damage (By similarity). Has a role in meiosis.</text>
</comment>
<comment type="subcellular location">
    <subcellularLocation>
        <location evidence="1">Mitochondrion</location>
    </subcellularLocation>
    <subcellularLocation>
        <location evidence="4">Cytoplasm</location>
    </subcellularLocation>
    <subcellularLocation>
        <location evidence="4">Nucleus</location>
    </subcellularLocation>
</comment>
<comment type="similarity">
    <text evidence="5">Belongs to the OXR1 family.</text>
</comment>
<organism>
    <name type="scientific">Schizosaccharomyces pombe (strain 972 / ATCC 24843)</name>
    <name type="common">Fission yeast</name>
    <dbReference type="NCBI Taxonomy" id="284812"/>
    <lineage>
        <taxon>Eukaryota</taxon>
        <taxon>Fungi</taxon>
        <taxon>Dikarya</taxon>
        <taxon>Ascomycota</taxon>
        <taxon>Taphrinomycotina</taxon>
        <taxon>Schizosaccharomycetes</taxon>
        <taxon>Schizosaccharomycetales</taxon>
        <taxon>Schizosaccharomycetaceae</taxon>
        <taxon>Schizosaccharomyces</taxon>
    </lineage>
</organism>
<protein>
    <recommendedName>
        <fullName>Oxidation resistance protein 1</fullName>
    </recommendedName>
    <alternativeName>
        <fullName>Meiotically up-regulated gene 63 protein</fullName>
    </alternativeName>
</protein>
<accession>O14284</accession>
<reference key="1">
    <citation type="journal article" date="2002" name="Nature">
        <title>The genome sequence of Schizosaccharomyces pombe.</title>
        <authorList>
            <person name="Wood V."/>
            <person name="Gwilliam R."/>
            <person name="Rajandream M.A."/>
            <person name="Lyne M.H."/>
            <person name="Lyne R."/>
            <person name="Stewart A."/>
            <person name="Sgouros J.G."/>
            <person name="Peat N."/>
            <person name="Hayles J."/>
            <person name="Baker S.G."/>
            <person name="Basham D."/>
            <person name="Bowman S."/>
            <person name="Brooks K."/>
            <person name="Brown D."/>
            <person name="Brown S."/>
            <person name="Chillingworth T."/>
            <person name="Churcher C.M."/>
            <person name="Collins M."/>
            <person name="Connor R."/>
            <person name="Cronin A."/>
            <person name="Davis P."/>
            <person name="Feltwell T."/>
            <person name="Fraser A."/>
            <person name="Gentles S."/>
            <person name="Goble A."/>
            <person name="Hamlin N."/>
            <person name="Harris D.E."/>
            <person name="Hidalgo J."/>
            <person name="Hodgson G."/>
            <person name="Holroyd S."/>
            <person name="Hornsby T."/>
            <person name="Howarth S."/>
            <person name="Huckle E.J."/>
            <person name="Hunt S."/>
            <person name="Jagels K."/>
            <person name="James K.D."/>
            <person name="Jones L."/>
            <person name="Jones M."/>
            <person name="Leather S."/>
            <person name="McDonald S."/>
            <person name="McLean J."/>
            <person name="Mooney P."/>
            <person name="Moule S."/>
            <person name="Mungall K.L."/>
            <person name="Murphy L.D."/>
            <person name="Niblett D."/>
            <person name="Odell C."/>
            <person name="Oliver K."/>
            <person name="O'Neil S."/>
            <person name="Pearson D."/>
            <person name="Quail M.A."/>
            <person name="Rabbinowitsch E."/>
            <person name="Rutherford K.M."/>
            <person name="Rutter S."/>
            <person name="Saunders D."/>
            <person name="Seeger K."/>
            <person name="Sharp S."/>
            <person name="Skelton J."/>
            <person name="Simmonds M.N."/>
            <person name="Squares R."/>
            <person name="Squares S."/>
            <person name="Stevens K."/>
            <person name="Taylor K."/>
            <person name="Taylor R.G."/>
            <person name="Tivey A."/>
            <person name="Walsh S.V."/>
            <person name="Warren T."/>
            <person name="Whitehead S."/>
            <person name="Woodward J.R."/>
            <person name="Volckaert G."/>
            <person name="Aert R."/>
            <person name="Robben J."/>
            <person name="Grymonprez B."/>
            <person name="Weltjens I."/>
            <person name="Vanstreels E."/>
            <person name="Rieger M."/>
            <person name="Schaefer M."/>
            <person name="Mueller-Auer S."/>
            <person name="Gabel C."/>
            <person name="Fuchs M."/>
            <person name="Duesterhoeft A."/>
            <person name="Fritzc C."/>
            <person name="Holzer E."/>
            <person name="Moestl D."/>
            <person name="Hilbert H."/>
            <person name="Borzym K."/>
            <person name="Langer I."/>
            <person name="Beck A."/>
            <person name="Lehrach H."/>
            <person name="Reinhardt R."/>
            <person name="Pohl T.M."/>
            <person name="Eger P."/>
            <person name="Zimmermann W."/>
            <person name="Wedler H."/>
            <person name="Wambutt R."/>
            <person name="Purnelle B."/>
            <person name="Goffeau A."/>
            <person name="Cadieu E."/>
            <person name="Dreano S."/>
            <person name="Gloux S."/>
            <person name="Lelaure V."/>
            <person name="Mottier S."/>
            <person name="Galibert F."/>
            <person name="Aves S.J."/>
            <person name="Xiang Z."/>
            <person name="Hunt C."/>
            <person name="Moore K."/>
            <person name="Hurst S.M."/>
            <person name="Lucas M."/>
            <person name="Rochet M."/>
            <person name="Gaillardin C."/>
            <person name="Tallada V.A."/>
            <person name="Garzon A."/>
            <person name="Thode G."/>
            <person name="Daga R.R."/>
            <person name="Cruzado L."/>
            <person name="Jimenez J."/>
            <person name="Sanchez M."/>
            <person name="del Rey F."/>
            <person name="Benito J."/>
            <person name="Dominguez A."/>
            <person name="Revuelta J.L."/>
            <person name="Moreno S."/>
            <person name="Armstrong J."/>
            <person name="Forsburg S.L."/>
            <person name="Cerutti L."/>
            <person name="Lowe T."/>
            <person name="McCombie W.R."/>
            <person name="Paulsen I."/>
            <person name="Potashkin J."/>
            <person name="Shpakovski G.V."/>
            <person name="Ussery D."/>
            <person name="Barrell B.G."/>
            <person name="Nurse P."/>
        </authorList>
    </citation>
    <scope>NUCLEOTIDE SEQUENCE [LARGE SCALE GENOMIC DNA]</scope>
    <source>
        <strain>972 / ATCC 24843</strain>
    </source>
</reference>
<reference key="2">
    <citation type="journal article" date="2005" name="Curr. Biol.">
        <title>A large-scale screen in S. pombe identifies seven novel genes required for critical meiotic events.</title>
        <authorList>
            <person name="Martin-Castellanos C."/>
            <person name="Blanco M."/>
            <person name="Rozalen A.E."/>
            <person name="Perez-Hidalgo L."/>
            <person name="Garcia A.I."/>
            <person name="Conde F."/>
            <person name="Mata J."/>
            <person name="Ellermeier C."/>
            <person name="Davis L."/>
            <person name="San-Segundo P."/>
            <person name="Smith G.R."/>
            <person name="Moreno S."/>
        </authorList>
    </citation>
    <scope>FUNCTION IN MEIOSIS</scope>
</reference>
<reference key="3">
    <citation type="journal article" date="2006" name="Nat. Biotechnol.">
        <title>ORFeome cloning and global analysis of protein localization in the fission yeast Schizosaccharomyces pombe.</title>
        <authorList>
            <person name="Matsuyama A."/>
            <person name="Arai R."/>
            <person name="Yashiroda Y."/>
            <person name="Shirai A."/>
            <person name="Kamata A."/>
            <person name="Sekido S."/>
            <person name="Kobayashi Y."/>
            <person name="Hashimoto A."/>
            <person name="Hamamoto M."/>
            <person name="Hiraoka Y."/>
            <person name="Horinouchi S."/>
            <person name="Yoshida M."/>
        </authorList>
    </citation>
    <scope>SUBCELLULAR LOCATION [LARGE SCALE ANALYSIS]</scope>
</reference>
<evidence type="ECO:0000250" key="1"/>
<evidence type="ECO:0000255" key="2">
    <source>
        <dbReference type="PROSITE-ProRule" id="PRU01234"/>
    </source>
</evidence>
<evidence type="ECO:0000269" key="3">
    <source>
    </source>
</evidence>
<evidence type="ECO:0000269" key="4">
    <source>
    </source>
</evidence>
<evidence type="ECO:0000305" key="5"/>